<protein>
    <recommendedName>
        <fullName>GLIPR1-like protein 2</fullName>
    </recommendedName>
</protein>
<feature type="chain" id="PRO_0000324387" description="GLIPR1-like protein 2">
    <location>
        <begin position="1"/>
        <end position="344"/>
    </location>
</feature>
<feature type="transmembrane region" description="Helical" evidence="1">
    <location>
        <begin position="254"/>
        <end position="274"/>
    </location>
</feature>
<feature type="domain" description="SCP">
    <location>
        <begin position="58"/>
        <end position="192"/>
    </location>
</feature>
<feature type="region of interest" description="Disordered" evidence="2">
    <location>
        <begin position="292"/>
        <end position="344"/>
    </location>
</feature>
<feature type="compositionally biased region" description="Acidic residues" evidence="2">
    <location>
        <begin position="292"/>
        <end position="304"/>
    </location>
</feature>
<feature type="compositionally biased region" description="Acidic residues" evidence="2">
    <location>
        <begin position="312"/>
        <end position="334"/>
    </location>
</feature>
<feature type="compositionally biased region" description="Basic and acidic residues" evidence="2">
    <location>
        <begin position="335"/>
        <end position="344"/>
    </location>
</feature>
<feature type="splice variant" id="VSP_032239" description="In isoform 5." evidence="6">
    <location>
        <begin position="1"/>
        <end position="107"/>
    </location>
</feature>
<feature type="splice variant" id="VSP_032240" description="In isoform 6." evidence="6">
    <location>
        <begin position="1"/>
        <end position="77"/>
    </location>
</feature>
<feature type="splice variant" id="VSP_032241" description="In isoform 6." evidence="6">
    <original>M</original>
    <variation>MLITMILHRARTK</variation>
    <location>
        <position position="78"/>
    </location>
</feature>
<feature type="splice variant" id="VSP_032242" description="In isoform 3." evidence="5">
    <original>TWDVALSRTARAWGKKCLFTHNIYLQDV</original>
    <variation>LWYCCDSDGSRFIIGFPNLSPRTPSAPL</variation>
    <location>
        <begin position="79"/>
        <end position="106"/>
    </location>
</feature>
<feature type="splice variant" id="VSP_032243" description="In isoform 3." evidence="5">
    <location>
        <begin position="107"/>
        <end position="344"/>
    </location>
</feature>
<feature type="splice variant" id="VSP_032244" description="In isoform 4." evidence="6">
    <original>L</original>
    <variation>RNTDEKTL</variation>
    <location>
        <position position="161"/>
    </location>
</feature>
<feature type="splice variant" id="VSP_032245" description="In isoform 4." evidence="6">
    <location>
        <begin position="162"/>
        <end position="344"/>
    </location>
</feature>
<feature type="splice variant" id="VSP_032246" description="In isoform 2." evidence="4">
    <original>NADRDQATYYRFWYPKWEMPRPVVCDPLCTFILLLRILCFILCVITVLIVQSQFPNILLEQQMIFTPEESEAGNEEEEKEEEKKEKEEMEMEIMEMEEEKEEREEEEEETQKEKMEEEEK</original>
    <variation>KIKKINMKKMHNGLDKKNKRLNTSFLWSC</variation>
    <location>
        <begin position="225"/>
        <end position="344"/>
    </location>
</feature>
<organism>
    <name type="scientific">Homo sapiens</name>
    <name type="common">Human</name>
    <dbReference type="NCBI Taxonomy" id="9606"/>
    <lineage>
        <taxon>Eukaryota</taxon>
        <taxon>Metazoa</taxon>
        <taxon>Chordata</taxon>
        <taxon>Craniata</taxon>
        <taxon>Vertebrata</taxon>
        <taxon>Euteleostomi</taxon>
        <taxon>Mammalia</taxon>
        <taxon>Eutheria</taxon>
        <taxon>Euarchontoglires</taxon>
        <taxon>Primates</taxon>
        <taxon>Haplorrhini</taxon>
        <taxon>Catarrhini</taxon>
        <taxon>Hominidae</taxon>
        <taxon>Homo</taxon>
    </lineage>
</organism>
<comment type="interaction">
    <interactant intactId="EBI-20835942">
        <id>Q4G1C9-2</id>
    </interactant>
    <interactant intactId="EBI-716404">
        <id>P16284</id>
        <label>PECAM1</label>
    </interactant>
    <organismsDiffer>false</organismsDiffer>
    <experiments>3</experiments>
</comment>
<comment type="interaction">
    <interactant intactId="EBI-20835942">
        <id>Q4G1C9-2</id>
    </interactant>
    <interactant intactId="EBI-473850">
        <id>P61086</id>
        <label>UBE2K</label>
    </interactant>
    <organismsDiffer>false</organismsDiffer>
    <experiments>3</experiments>
</comment>
<comment type="interaction">
    <interactant intactId="EBI-20835942">
        <id>Q4G1C9-2</id>
    </interactant>
    <interactant intactId="EBI-353844">
        <id>P08670</id>
        <label>VIM</label>
    </interactant>
    <organismsDiffer>false</organismsDiffer>
    <experiments>3</experiments>
</comment>
<comment type="subcellular location">
    <subcellularLocation>
        <location evidence="6">Membrane</location>
        <topology evidence="6">Single-pass membrane protein</topology>
    </subcellularLocation>
</comment>
<comment type="alternative products">
    <event type="alternative splicing"/>
    <isoform>
        <id>Q4G1C9-1</id>
        <name>1</name>
        <name>delta</name>
        <sequence type="displayed"/>
    </isoform>
    <isoform>
        <id>Q4G1C9-2</id>
        <name>2</name>
        <name>alpha</name>
        <sequence type="described" ref="VSP_032246"/>
    </isoform>
    <isoform>
        <id>Q4G1C9-3</id>
        <name>3</name>
        <sequence type="described" ref="VSP_032242 VSP_032243"/>
    </isoform>
    <isoform>
        <id>Q4G1C9-4</id>
        <name>4</name>
        <name>epsilon</name>
        <sequence type="described" ref="VSP_032244 VSP_032245"/>
    </isoform>
    <isoform>
        <id>Q4G1C9-5</id>
        <name>5</name>
        <name>gamma</name>
        <sequence type="described" ref="VSP_032239"/>
    </isoform>
    <isoform>
        <id>Q4G1C9-6</id>
        <name>6</name>
        <name>beta</name>
        <sequence type="described" ref="VSP_032240 VSP_032241"/>
    </isoform>
</comment>
<comment type="tissue specificity">
    <text evidence="3">Highly expressed in testis. Detected in prostate, kidney, bladder, lung and bone marrow.</text>
</comment>
<comment type="induction">
    <text evidence="3">Up-regulated by doxycycline.</text>
</comment>
<comment type="similarity">
    <text evidence="6">Belongs to the CRISP family.</text>
</comment>
<comment type="sequence caution" evidence="6">
    <conflict type="miscellaneous discrepancy">
        <sequence resource="EMBL-CDS" id="AAH16749"/>
    </conflict>
    <text>Contaminating sequence. Potential poly-A sequence.</text>
</comment>
<comment type="sequence caution" evidence="6">
    <conflict type="erroneous termination">
        <sequence resource="EMBL-CDS" id="BAC04085"/>
    </conflict>
    <text>Truncated C-terminus.</text>
</comment>
<comment type="sequence caution" evidence="6">
    <conflict type="erroneous initiation">
        <sequence resource="EMBL-CDS" id="CAE45957"/>
    </conflict>
</comment>
<keyword id="KW-0025">Alternative splicing</keyword>
<keyword id="KW-0472">Membrane</keyword>
<keyword id="KW-1267">Proteomics identification</keyword>
<keyword id="KW-1185">Reference proteome</keyword>
<keyword id="KW-0812">Transmembrane</keyword>
<keyword id="KW-1133">Transmembrane helix</keyword>
<evidence type="ECO:0000255" key="1"/>
<evidence type="ECO:0000256" key="2">
    <source>
        <dbReference type="SAM" id="MobiDB-lite"/>
    </source>
</evidence>
<evidence type="ECO:0000269" key="3">
    <source>
    </source>
</evidence>
<evidence type="ECO:0000303" key="4">
    <source>
    </source>
</evidence>
<evidence type="ECO:0000303" key="5">
    <source>
    </source>
</evidence>
<evidence type="ECO:0000305" key="6"/>
<sequence length="344" mass="40179">MEAARPFAREWRAQSLPLAVGGVLKLRLCELWLLLLGSSLNARFLPDEEDVDFINEYVNLHNELRGDVIPRGSNLRFMTWDVALSRTARAWGKKCLFTHNIYLQDVQMVHPKFYGIGENMWVGPENEFTASIAIRSWHAEKKMYNFENGSCSGDCSNYIQLVWDHSYKVGCAVTPCSKIGHIIHAAIFICNYAPGGTLTRRPYEPGIFCTRCGRRDKCTDFLCSNADRDQATYYRFWYPKWEMPRPVVCDPLCTFILLLRILCFILCVITVLIVQSQFPNILLEQQMIFTPEESEAGNEEEEKEEEKKEKEEMEMEIMEMEEEKEEREEEEEETQKEKMEEEEK</sequence>
<proteinExistence type="evidence at protein level"/>
<gene>
    <name type="primary">GLIPR1L2</name>
</gene>
<accession>Q4G1C9</accession>
<accession>Q6MZS1</accession>
<accession>Q8N6N0</accession>
<accession>Q8NA43</accession>
<name>GRPL2_HUMAN</name>
<dbReference type="EMBL" id="AK093175">
    <property type="protein sequence ID" value="BAC04085.1"/>
    <property type="status" value="ALT_SEQ"/>
    <property type="molecule type" value="mRNA"/>
</dbReference>
<dbReference type="EMBL" id="BX640916">
    <property type="protein sequence ID" value="CAE45957.1"/>
    <property type="status" value="ALT_INIT"/>
    <property type="molecule type" value="mRNA"/>
</dbReference>
<dbReference type="EMBL" id="AC121761">
    <property type="status" value="NOT_ANNOTATED_CDS"/>
    <property type="molecule type" value="Genomic_DNA"/>
</dbReference>
<dbReference type="EMBL" id="CH471054">
    <property type="protein sequence ID" value="EAW97305.1"/>
    <property type="molecule type" value="Genomic_DNA"/>
</dbReference>
<dbReference type="EMBL" id="BC016749">
    <property type="protein sequence ID" value="AAH16749.1"/>
    <property type="status" value="ALT_SEQ"/>
    <property type="molecule type" value="mRNA"/>
</dbReference>
<dbReference type="EMBL" id="BC029557">
    <property type="protein sequence ID" value="AAH29557.1"/>
    <property type="molecule type" value="mRNA"/>
</dbReference>
<dbReference type="CCDS" id="CCDS58258.1">
    <molecule id="Q4G1C9-1"/>
</dbReference>
<dbReference type="CCDS" id="CCDS9010.1">
    <molecule id="Q4G1C9-2"/>
</dbReference>
<dbReference type="RefSeq" id="NP_001257325.1">
    <molecule id="Q4G1C9-1"/>
    <property type="nucleotide sequence ID" value="NM_001270396.2"/>
</dbReference>
<dbReference type="RefSeq" id="NP_689649.1">
    <molecule id="Q4G1C9-2"/>
    <property type="nucleotide sequence ID" value="NM_152436.3"/>
</dbReference>
<dbReference type="RefSeq" id="XP_011536251.1">
    <molecule id="Q4G1C9-5"/>
    <property type="nucleotide sequence ID" value="XM_011537949.2"/>
</dbReference>
<dbReference type="RefSeq" id="XP_011536252.1">
    <property type="nucleotide sequence ID" value="XM_011537950.2"/>
</dbReference>
<dbReference type="RefSeq" id="XP_016874338.1">
    <property type="nucleotide sequence ID" value="XM_017018849.1"/>
</dbReference>
<dbReference type="RefSeq" id="XP_054227143.1">
    <molecule id="Q4G1C9-5"/>
    <property type="nucleotide sequence ID" value="XM_054371168.1"/>
</dbReference>
<dbReference type="SMR" id="Q4G1C9"/>
<dbReference type="BioGRID" id="126842">
    <property type="interactions" value="23"/>
</dbReference>
<dbReference type="FunCoup" id="Q4G1C9">
    <property type="interactions" value="64"/>
</dbReference>
<dbReference type="IntAct" id="Q4G1C9">
    <property type="interactions" value="17"/>
</dbReference>
<dbReference type="STRING" id="9606.ENSP00000448248"/>
<dbReference type="GlyGen" id="Q4G1C9">
    <property type="glycosylation" value="1 site"/>
</dbReference>
<dbReference type="iPTMnet" id="Q4G1C9"/>
<dbReference type="PhosphoSitePlus" id="Q4G1C9"/>
<dbReference type="BioMuta" id="GLIPR1L2"/>
<dbReference type="DMDM" id="172046790"/>
<dbReference type="MassIVE" id="Q4G1C9"/>
<dbReference type="PaxDb" id="9606-ENSP00000448248"/>
<dbReference type="PeptideAtlas" id="Q4G1C9"/>
<dbReference type="ProteomicsDB" id="62160">
    <molecule id="Q4G1C9-1"/>
</dbReference>
<dbReference type="ProteomicsDB" id="62161">
    <molecule id="Q4G1C9-2"/>
</dbReference>
<dbReference type="ProteomicsDB" id="62162">
    <molecule id="Q4G1C9-3"/>
</dbReference>
<dbReference type="ProteomicsDB" id="62163">
    <molecule id="Q4G1C9-4"/>
</dbReference>
<dbReference type="ProteomicsDB" id="62164">
    <molecule id="Q4G1C9-5"/>
</dbReference>
<dbReference type="ProteomicsDB" id="62165">
    <molecule id="Q4G1C9-6"/>
</dbReference>
<dbReference type="TopDownProteomics" id="Q4G1C9-6">
    <molecule id="Q4G1C9-6"/>
</dbReference>
<dbReference type="Antibodypedia" id="29602">
    <property type="antibodies" value="95 antibodies from 20 providers"/>
</dbReference>
<dbReference type="DNASU" id="144321"/>
<dbReference type="Ensembl" id="ENST00000320460.8">
    <molecule id="Q4G1C9-2"/>
    <property type="protein sequence ID" value="ENSP00000317385.4"/>
    <property type="gene ID" value="ENSG00000180481.11"/>
</dbReference>
<dbReference type="Ensembl" id="ENST00000378692.7">
    <molecule id="Q4G1C9-5"/>
    <property type="protein sequence ID" value="ENSP00000367963.3"/>
    <property type="gene ID" value="ENSG00000180481.11"/>
</dbReference>
<dbReference type="Ensembl" id="ENST00000547164.1">
    <molecule id="Q4G1C9-4"/>
    <property type="protein sequence ID" value="ENSP00000447980.1"/>
    <property type="gene ID" value="ENSG00000180481.11"/>
</dbReference>
<dbReference type="Ensembl" id="ENST00000550916.6">
    <molecule id="Q4G1C9-1"/>
    <property type="protein sequence ID" value="ENSP00000448248.1"/>
    <property type="gene ID" value="ENSG00000180481.11"/>
</dbReference>
<dbReference type="GeneID" id="144321"/>
<dbReference type="KEGG" id="hsa:144321"/>
<dbReference type="MANE-Select" id="ENST00000550916.6">
    <property type="protein sequence ID" value="ENSP00000448248.1"/>
    <property type="RefSeq nucleotide sequence ID" value="NM_001270396.2"/>
    <property type="RefSeq protein sequence ID" value="NP_001257325.1"/>
</dbReference>
<dbReference type="UCSC" id="uc001sxp.3">
    <molecule id="Q4G1C9-1"/>
    <property type="organism name" value="human"/>
</dbReference>
<dbReference type="AGR" id="HGNC:28592"/>
<dbReference type="CTD" id="144321"/>
<dbReference type="DisGeNET" id="144321"/>
<dbReference type="GeneCards" id="GLIPR1L2"/>
<dbReference type="HGNC" id="HGNC:28592">
    <property type="gene designation" value="GLIPR1L2"/>
</dbReference>
<dbReference type="HPA" id="ENSG00000180481">
    <property type="expression patterns" value="Tissue enriched (testis)"/>
</dbReference>
<dbReference type="MIM" id="610394">
    <property type="type" value="gene"/>
</dbReference>
<dbReference type="neXtProt" id="NX_Q4G1C9"/>
<dbReference type="OpenTargets" id="ENSG00000180481"/>
<dbReference type="PharmGKB" id="PA145008279"/>
<dbReference type="VEuPathDB" id="HostDB:ENSG00000180481"/>
<dbReference type="eggNOG" id="KOG3017">
    <property type="taxonomic scope" value="Eukaryota"/>
</dbReference>
<dbReference type="GeneTree" id="ENSGT00940000162357"/>
<dbReference type="HOGENOM" id="CLU_035730_2_0_1"/>
<dbReference type="InParanoid" id="Q4G1C9"/>
<dbReference type="OMA" id="YYQFWYP"/>
<dbReference type="OrthoDB" id="43654at2759"/>
<dbReference type="PAN-GO" id="Q4G1C9">
    <property type="GO annotations" value="2 GO annotations based on evolutionary models"/>
</dbReference>
<dbReference type="PhylomeDB" id="Q4G1C9"/>
<dbReference type="TreeFam" id="TF316148"/>
<dbReference type="PathwayCommons" id="Q4G1C9"/>
<dbReference type="SignaLink" id="Q4G1C9"/>
<dbReference type="BioGRID-ORCS" id="144321">
    <property type="hits" value="20 hits in 1152 CRISPR screens"/>
</dbReference>
<dbReference type="ChiTaRS" id="GLIPR1L2">
    <property type="organism name" value="human"/>
</dbReference>
<dbReference type="GenomeRNAi" id="144321"/>
<dbReference type="Pharos" id="Q4G1C9">
    <property type="development level" value="Tdark"/>
</dbReference>
<dbReference type="PRO" id="PR:Q4G1C9"/>
<dbReference type="Proteomes" id="UP000005640">
    <property type="component" value="Chromosome 12"/>
</dbReference>
<dbReference type="RNAct" id="Q4G1C9">
    <property type="molecule type" value="protein"/>
</dbReference>
<dbReference type="Bgee" id="ENSG00000180481">
    <property type="expression patterns" value="Expressed in left testis and 97 other cell types or tissues"/>
</dbReference>
<dbReference type="GO" id="GO:0005615">
    <property type="term" value="C:extracellular space"/>
    <property type="evidence" value="ECO:0000318"/>
    <property type="project" value="GO_Central"/>
</dbReference>
<dbReference type="GO" id="GO:0016020">
    <property type="term" value="C:membrane"/>
    <property type="evidence" value="ECO:0007669"/>
    <property type="project" value="UniProtKB-SubCell"/>
</dbReference>
<dbReference type="GO" id="GO:0019953">
    <property type="term" value="P:sexual reproduction"/>
    <property type="evidence" value="ECO:0000318"/>
    <property type="project" value="GO_Central"/>
</dbReference>
<dbReference type="CDD" id="cd05385">
    <property type="entry name" value="CAP_GLIPR1-like"/>
    <property type="match status" value="1"/>
</dbReference>
<dbReference type="FunFam" id="3.40.33.10:FF:000017">
    <property type="entry name" value="GLIPR1 like 2"/>
    <property type="match status" value="1"/>
</dbReference>
<dbReference type="Gene3D" id="3.40.33.10">
    <property type="entry name" value="CAP"/>
    <property type="match status" value="1"/>
</dbReference>
<dbReference type="InterPro" id="IPR014044">
    <property type="entry name" value="CAP_dom"/>
</dbReference>
<dbReference type="InterPro" id="IPR035940">
    <property type="entry name" value="CAP_sf"/>
</dbReference>
<dbReference type="InterPro" id="IPR001283">
    <property type="entry name" value="CRISP-related"/>
</dbReference>
<dbReference type="InterPro" id="IPR034121">
    <property type="entry name" value="SCP_GLIPR-1-like"/>
</dbReference>
<dbReference type="PANTHER" id="PTHR10334">
    <property type="entry name" value="CYSTEINE-RICH SECRETORY PROTEIN-RELATED"/>
    <property type="match status" value="1"/>
</dbReference>
<dbReference type="Pfam" id="PF00188">
    <property type="entry name" value="CAP"/>
    <property type="match status" value="1"/>
</dbReference>
<dbReference type="PRINTS" id="PR00837">
    <property type="entry name" value="V5TPXLIKE"/>
</dbReference>
<dbReference type="SMART" id="SM00198">
    <property type="entry name" value="SCP"/>
    <property type="match status" value="1"/>
</dbReference>
<dbReference type="SUPFAM" id="SSF55797">
    <property type="entry name" value="PR-1-like"/>
    <property type="match status" value="1"/>
</dbReference>
<reference key="1">
    <citation type="journal article" date="2004" name="Nat. Genet.">
        <title>Complete sequencing and characterization of 21,243 full-length human cDNAs.</title>
        <authorList>
            <person name="Ota T."/>
            <person name="Suzuki Y."/>
            <person name="Nishikawa T."/>
            <person name="Otsuki T."/>
            <person name="Sugiyama T."/>
            <person name="Irie R."/>
            <person name="Wakamatsu A."/>
            <person name="Hayashi K."/>
            <person name="Sato H."/>
            <person name="Nagai K."/>
            <person name="Kimura K."/>
            <person name="Makita H."/>
            <person name="Sekine M."/>
            <person name="Obayashi M."/>
            <person name="Nishi T."/>
            <person name="Shibahara T."/>
            <person name="Tanaka T."/>
            <person name="Ishii S."/>
            <person name="Yamamoto J."/>
            <person name="Saito K."/>
            <person name="Kawai Y."/>
            <person name="Isono Y."/>
            <person name="Nakamura Y."/>
            <person name="Nagahari K."/>
            <person name="Murakami K."/>
            <person name="Yasuda T."/>
            <person name="Iwayanagi T."/>
            <person name="Wagatsuma M."/>
            <person name="Shiratori A."/>
            <person name="Sudo H."/>
            <person name="Hosoiri T."/>
            <person name="Kaku Y."/>
            <person name="Kodaira H."/>
            <person name="Kondo H."/>
            <person name="Sugawara M."/>
            <person name="Takahashi M."/>
            <person name="Kanda K."/>
            <person name="Yokoi T."/>
            <person name="Furuya T."/>
            <person name="Kikkawa E."/>
            <person name="Omura Y."/>
            <person name="Abe K."/>
            <person name="Kamihara K."/>
            <person name="Katsuta N."/>
            <person name="Sato K."/>
            <person name="Tanikawa M."/>
            <person name="Yamazaki M."/>
            <person name="Ninomiya K."/>
            <person name="Ishibashi T."/>
            <person name="Yamashita H."/>
            <person name="Murakawa K."/>
            <person name="Fujimori K."/>
            <person name="Tanai H."/>
            <person name="Kimata M."/>
            <person name="Watanabe M."/>
            <person name="Hiraoka S."/>
            <person name="Chiba Y."/>
            <person name="Ishida S."/>
            <person name="Ono Y."/>
            <person name="Takiguchi S."/>
            <person name="Watanabe S."/>
            <person name="Yosida M."/>
            <person name="Hotuta T."/>
            <person name="Kusano J."/>
            <person name="Kanehori K."/>
            <person name="Takahashi-Fujii A."/>
            <person name="Hara H."/>
            <person name="Tanase T.-O."/>
            <person name="Nomura Y."/>
            <person name="Togiya S."/>
            <person name="Komai F."/>
            <person name="Hara R."/>
            <person name="Takeuchi K."/>
            <person name="Arita M."/>
            <person name="Imose N."/>
            <person name="Musashino K."/>
            <person name="Yuuki H."/>
            <person name="Oshima A."/>
            <person name="Sasaki N."/>
            <person name="Aotsuka S."/>
            <person name="Yoshikawa Y."/>
            <person name="Matsunawa H."/>
            <person name="Ichihara T."/>
            <person name="Shiohata N."/>
            <person name="Sano S."/>
            <person name="Moriya S."/>
            <person name="Momiyama H."/>
            <person name="Satoh N."/>
            <person name="Takami S."/>
            <person name="Terashima Y."/>
            <person name="Suzuki O."/>
            <person name="Nakagawa S."/>
            <person name="Senoh A."/>
            <person name="Mizoguchi H."/>
            <person name="Goto Y."/>
            <person name="Shimizu F."/>
            <person name="Wakebe H."/>
            <person name="Hishigaki H."/>
            <person name="Watanabe T."/>
            <person name="Sugiyama A."/>
            <person name="Takemoto M."/>
            <person name="Kawakami B."/>
            <person name="Yamazaki M."/>
            <person name="Watanabe K."/>
            <person name="Kumagai A."/>
            <person name="Itakura S."/>
            <person name="Fukuzumi Y."/>
            <person name="Fujimori Y."/>
            <person name="Komiyama M."/>
            <person name="Tashiro H."/>
            <person name="Tanigami A."/>
            <person name="Fujiwara T."/>
            <person name="Ono T."/>
            <person name="Yamada K."/>
            <person name="Fujii Y."/>
            <person name="Ozaki K."/>
            <person name="Hirao M."/>
            <person name="Ohmori Y."/>
            <person name="Kawabata A."/>
            <person name="Hikiji T."/>
            <person name="Kobatake N."/>
            <person name="Inagaki H."/>
            <person name="Ikema Y."/>
            <person name="Okamoto S."/>
            <person name="Okitani R."/>
            <person name="Kawakami T."/>
            <person name="Noguchi S."/>
            <person name="Itoh T."/>
            <person name="Shigeta K."/>
            <person name="Senba T."/>
            <person name="Matsumura K."/>
            <person name="Nakajima Y."/>
            <person name="Mizuno T."/>
            <person name="Morinaga M."/>
            <person name="Sasaki M."/>
            <person name="Togashi T."/>
            <person name="Oyama M."/>
            <person name="Hata H."/>
            <person name="Watanabe M."/>
            <person name="Komatsu T."/>
            <person name="Mizushima-Sugano J."/>
            <person name="Satoh T."/>
            <person name="Shirai Y."/>
            <person name="Takahashi Y."/>
            <person name="Nakagawa K."/>
            <person name="Okumura K."/>
            <person name="Nagase T."/>
            <person name="Nomura N."/>
            <person name="Kikuchi H."/>
            <person name="Masuho Y."/>
            <person name="Yamashita R."/>
            <person name="Nakai K."/>
            <person name="Yada T."/>
            <person name="Nakamura Y."/>
            <person name="Ohara O."/>
            <person name="Isogai T."/>
            <person name="Sugano S."/>
        </authorList>
    </citation>
    <scope>NUCLEOTIDE SEQUENCE [LARGE SCALE MRNA] (ISOFORM 1)</scope>
    <source>
        <tissue>Testis</tissue>
    </source>
</reference>
<reference key="2">
    <citation type="journal article" date="2007" name="BMC Genomics">
        <title>The full-ORF clone resource of the German cDNA consortium.</title>
        <authorList>
            <person name="Bechtel S."/>
            <person name="Rosenfelder H."/>
            <person name="Duda A."/>
            <person name="Schmidt C.P."/>
            <person name="Ernst U."/>
            <person name="Wellenreuther R."/>
            <person name="Mehrle A."/>
            <person name="Schuster C."/>
            <person name="Bahr A."/>
            <person name="Bloecker H."/>
            <person name="Heubner D."/>
            <person name="Hoerlein A."/>
            <person name="Michel G."/>
            <person name="Wedler H."/>
            <person name="Koehrer K."/>
            <person name="Ottenwaelder B."/>
            <person name="Poustka A."/>
            <person name="Wiemann S."/>
            <person name="Schupp I."/>
        </authorList>
    </citation>
    <scope>NUCLEOTIDE SEQUENCE [LARGE SCALE MRNA] (ISOFORM 3)</scope>
    <source>
        <tissue>Lymph node</tissue>
    </source>
</reference>
<reference key="3">
    <citation type="journal article" date="2006" name="Nature">
        <title>The finished DNA sequence of human chromosome 12.</title>
        <authorList>
            <person name="Scherer S.E."/>
            <person name="Muzny D.M."/>
            <person name="Buhay C.J."/>
            <person name="Chen R."/>
            <person name="Cree A."/>
            <person name="Ding Y."/>
            <person name="Dugan-Rocha S."/>
            <person name="Gill R."/>
            <person name="Gunaratne P."/>
            <person name="Harris R.A."/>
            <person name="Hawes A.C."/>
            <person name="Hernandez J."/>
            <person name="Hodgson A.V."/>
            <person name="Hume J."/>
            <person name="Jackson A."/>
            <person name="Khan Z.M."/>
            <person name="Kovar-Smith C."/>
            <person name="Lewis L.R."/>
            <person name="Lozado R.J."/>
            <person name="Metzker M.L."/>
            <person name="Milosavljevic A."/>
            <person name="Miner G.R."/>
            <person name="Montgomery K.T."/>
            <person name="Morgan M.B."/>
            <person name="Nazareth L.V."/>
            <person name="Scott G."/>
            <person name="Sodergren E."/>
            <person name="Song X.-Z."/>
            <person name="Steffen D."/>
            <person name="Lovering R.C."/>
            <person name="Wheeler D.A."/>
            <person name="Worley K.C."/>
            <person name="Yuan Y."/>
            <person name="Zhang Z."/>
            <person name="Adams C.Q."/>
            <person name="Ansari-Lari M.A."/>
            <person name="Ayele M."/>
            <person name="Brown M.J."/>
            <person name="Chen G."/>
            <person name="Chen Z."/>
            <person name="Clerc-Blankenburg K.P."/>
            <person name="Davis C."/>
            <person name="Delgado O."/>
            <person name="Dinh H.H."/>
            <person name="Draper H."/>
            <person name="Gonzalez-Garay M.L."/>
            <person name="Havlak P."/>
            <person name="Jackson L.R."/>
            <person name="Jacob L.S."/>
            <person name="Kelly S.H."/>
            <person name="Li L."/>
            <person name="Li Z."/>
            <person name="Liu J."/>
            <person name="Liu W."/>
            <person name="Lu J."/>
            <person name="Maheshwari M."/>
            <person name="Nguyen B.-V."/>
            <person name="Okwuonu G.O."/>
            <person name="Pasternak S."/>
            <person name="Perez L.M."/>
            <person name="Plopper F.J.H."/>
            <person name="Santibanez J."/>
            <person name="Shen H."/>
            <person name="Tabor P.E."/>
            <person name="Verduzco D."/>
            <person name="Waldron L."/>
            <person name="Wang Q."/>
            <person name="Williams G.A."/>
            <person name="Zhang J."/>
            <person name="Zhou J."/>
            <person name="Allen C.C."/>
            <person name="Amin A.G."/>
            <person name="Anyalebechi V."/>
            <person name="Bailey M."/>
            <person name="Barbaria J.A."/>
            <person name="Bimage K.E."/>
            <person name="Bryant N.P."/>
            <person name="Burch P.E."/>
            <person name="Burkett C.E."/>
            <person name="Burrell K.L."/>
            <person name="Calderon E."/>
            <person name="Cardenas V."/>
            <person name="Carter K."/>
            <person name="Casias K."/>
            <person name="Cavazos I."/>
            <person name="Cavazos S.R."/>
            <person name="Ceasar H."/>
            <person name="Chacko J."/>
            <person name="Chan S.N."/>
            <person name="Chavez D."/>
            <person name="Christopoulos C."/>
            <person name="Chu J."/>
            <person name="Cockrell R."/>
            <person name="Cox C.D."/>
            <person name="Dang M."/>
            <person name="Dathorne S.R."/>
            <person name="David R."/>
            <person name="Davis C.M."/>
            <person name="Davy-Carroll L."/>
            <person name="Deshazo D.R."/>
            <person name="Donlin J.E."/>
            <person name="D'Souza L."/>
            <person name="Eaves K.A."/>
            <person name="Egan A."/>
            <person name="Emery-Cohen A.J."/>
            <person name="Escotto M."/>
            <person name="Flagg N."/>
            <person name="Forbes L.D."/>
            <person name="Gabisi A.M."/>
            <person name="Garza M."/>
            <person name="Hamilton C."/>
            <person name="Henderson N."/>
            <person name="Hernandez O."/>
            <person name="Hines S."/>
            <person name="Hogues M.E."/>
            <person name="Huang M."/>
            <person name="Idlebird D.G."/>
            <person name="Johnson R."/>
            <person name="Jolivet A."/>
            <person name="Jones S."/>
            <person name="Kagan R."/>
            <person name="King L.M."/>
            <person name="Leal B."/>
            <person name="Lebow H."/>
            <person name="Lee S."/>
            <person name="LeVan J.M."/>
            <person name="Lewis L.C."/>
            <person name="London P."/>
            <person name="Lorensuhewa L.M."/>
            <person name="Loulseged H."/>
            <person name="Lovett D.A."/>
            <person name="Lucier A."/>
            <person name="Lucier R.L."/>
            <person name="Ma J."/>
            <person name="Madu R.C."/>
            <person name="Mapua P."/>
            <person name="Martindale A.D."/>
            <person name="Martinez E."/>
            <person name="Massey E."/>
            <person name="Mawhiney S."/>
            <person name="Meador M.G."/>
            <person name="Mendez S."/>
            <person name="Mercado C."/>
            <person name="Mercado I.C."/>
            <person name="Merritt C.E."/>
            <person name="Miner Z.L."/>
            <person name="Minja E."/>
            <person name="Mitchell T."/>
            <person name="Mohabbat F."/>
            <person name="Mohabbat K."/>
            <person name="Montgomery B."/>
            <person name="Moore N."/>
            <person name="Morris S."/>
            <person name="Munidasa M."/>
            <person name="Ngo R.N."/>
            <person name="Nguyen N.B."/>
            <person name="Nickerson E."/>
            <person name="Nwaokelemeh O.O."/>
            <person name="Nwokenkwo S."/>
            <person name="Obregon M."/>
            <person name="Oguh M."/>
            <person name="Oragunye N."/>
            <person name="Oviedo R.J."/>
            <person name="Parish B.J."/>
            <person name="Parker D.N."/>
            <person name="Parrish J."/>
            <person name="Parks K.L."/>
            <person name="Paul H.A."/>
            <person name="Payton B.A."/>
            <person name="Perez A."/>
            <person name="Perrin W."/>
            <person name="Pickens A."/>
            <person name="Primus E.L."/>
            <person name="Pu L.-L."/>
            <person name="Puazo M."/>
            <person name="Quiles M.M."/>
            <person name="Quiroz J.B."/>
            <person name="Rabata D."/>
            <person name="Reeves K."/>
            <person name="Ruiz S.J."/>
            <person name="Shao H."/>
            <person name="Sisson I."/>
            <person name="Sonaike T."/>
            <person name="Sorelle R.P."/>
            <person name="Sutton A.E."/>
            <person name="Svatek A.F."/>
            <person name="Svetz L.A."/>
            <person name="Tamerisa K.S."/>
            <person name="Taylor T.R."/>
            <person name="Teague B."/>
            <person name="Thomas N."/>
            <person name="Thorn R.D."/>
            <person name="Trejos Z.Y."/>
            <person name="Trevino B.K."/>
            <person name="Ukegbu O.N."/>
            <person name="Urban J.B."/>
            <person name="Vasquez L.I."/>
            <person name="Vera V.A."/>
            <person name="Villasana D.M."/>
            <person name="Wang L."/>
            <person name="Ward-Moore S."/>
            <person name="Warren J.T."/>
            <person name="Wei X."/>
            <person name="White F."/>
            <person name="Williamson A.L."/>
            <person name="Wleczyk R."/>
            <person name="Wooden H.S."/>
            <person name="Wooden S.H."/>
            <person name="Yen J."/>
            <person name="Yoon L."/>
            <person name="Yoon V."/>
            <person name="Zorrilla S.E."/>
            <person name="Nelson D."/>
            <person name="Kucherlapati R."/>
            <person name="Weinstock G."/>
            <person name="Gibbs R.A."/>
        </authorList>
    </citation>
    <scope>NUCLEOTIDE SEQUENCE [LARGE SCALE GENOMIC DNA]</scope>
</reference>
<reference key="4">
    <citation type="submission" date="2005-07" db="EMBL/GenBank/DDBJ databases">
        <authorList>
            <person name="Mural R.J."/>
            <person name="Istrail S."/>
            <person name="Sutton G.G."/>
            <person name="Florea L."/>
            <person name="Halpern A.L."/>
            <person name="Mobarry C.M."/>
            <person name="Lippert R."/>
            <person name="Walenz B."/>
            <person name="Shatkay H."/>
            <person name="Dew I."/>
            <person name="Miller J.R."/>
            <person name="Flanigan M.J."/>
            <person name="Edwards N.J."/>
            <person name="Bolanos R."/>
            <person name="Fasulo D."/>
            <person name="Halldorsson B.V."/>
            <person name="Hannenhalli S."/>
            <person name="Turner R."/>
            <person name="Yooseph S."/>
            <person name="Lu F."/>
            <person name="Nusskern D.R."/>
            <person name="Shue B.C."/>
            <person name="Zheng X.H."/>
            <person name="Zhong F."/>
            <person name="Delcher A.L."/>
            <person name="Huson D.H."/>
            <person name="Kravitz S.A."/>
            <person name="Mouchard L."/>
            <person name="Reinert K."/>
            <person name="Remington K.A."/>
            <person name="Clark A.G."/>
            <person name="Waterman M.S."/>
            <person name="Eichler E.E."/>
            <person name="Adams M.D."/>
            <person name="Hunkapiller M.W."/>
            <person name="Myers E.W."/>
            <person name="Venter J.C."/>
        </authorList>
    </citation>
    <scope>NUCLEOTIDE SEQUENCE [LARGE SCALE GENOMIC DNA]</scope>
</reference>
<reference key="5">
    <citation type="journal article" date="2004" name="Genome Res.">
        <title>The status, quality, and expansion of the NIH full-length cDNA project: the Mammalian Gene Collection (MGC).</title>
        <authorList>
            <consortium name="The MGC Project Team"/>
        </authorList>
    </citation>
    <scope>NUCLEOTIDE SEQUENCE [LARGE SCALE MRNA] (ISOFORM 2)</scope>
    <scope>NUCLEOTIDE SEQUENCE [LARGE SCALE MRNA] OF 1-308 (ISOFORM 1)</scope>
    <source>
        <tissue>Brain</tissue>
        <tissue>Testis</tissue>
    </source>
</reference>
<reference key="6">
    <citation type="journal article" date="2006" name="Genomics">
        <title>Identification and characterization of RTVP1/GLIPR1-like genes, a novel p53 target gene cluster.</title>
        <authorList>
            <person name="Ren C."/>
            <person name="Ren C.-H."/>
            <person name="Li L."/>
            <person name="Goltsov A.A."/>
            <person name="Thompson T.C."/>
        </authorList>
    </citation>
    <scope>ALTERNATIVE SPLICING (ISOFORMS 1; 2; 4; 5 AND 6)</scope>
    <scope>TISSUE SPECIFICITY</scope>
    <scope>INDUCTION BY DOXYCYCLINE</scope>
</reference>